<feature type="chain" id="PRO_0000080061" description="Adenosine kinase">
    <location>
        <begin position="1"/>
        <end position="340"/>
    </location>
</feature>
<feature type="active site" evidence="1">
    <location>
        <position position="292"/>
    </location>
</feature>
<evidence type="ECO:0000250" key="1"/>
<evidence type="ECO:0000305" key="2"/>
<comment type="catalytic activity">
    <reaction>
        <text>adenosine + ATP = AMP + ADP + H(+)</text>
        <dbReference type="Rhea" id="RHEA:20824"/>
        <dbReference type="ChEBI" id="CHEBI:15378"/>
        <dbReference type="ChEBI" id="CHEBI:16335"/>
        <dbReference type="ChEBI" id="CHEBI:30616"/>
        <dbReference type="ChEBI" id="CHEBI:456215"/>
        <dbReference type="ChEBI" id="CHEBI:456216"/>
        <dbReference type="EC" id="2.7.1.20"/>
    </reaction>
</comment>
<comment type="cofactor">
    <cofactor evidence="1">
        <name>Mg(2+)</name>
        <dbReference type="ChEBI" id="CHEBI:18420"/>
    </cofactor>
</comment>
<comment type="pathway">
    <text>Purine metabolism; AMP biosynthesis via salvage pathway; AMP from adenosine: step 1/1.</text>
</comment>
<comment type="similarity">
    <text evidence="2">Belongs to the carbohydrate kinase PfkB family.</text>
</comment>
<sequence length="340" mass="36709">MSSYILFGLENPLLDYYVGGETATLEKYGLKSNDAVLASESQMGIYKEPCVSYSAGGAAQNSCRAAQYVLPPNSTVFAGCVGQDKFADMLLESNEKAGLRSEFSVDPTTPTGVCAVVLSNNNKNRSLCTNLGAANNYKLKDLQQPNVWKFVEEAKVIYVGGFHLTVSPESMLCLAQHANENNKPYIMNLSAPFLSQFFKEQMDSVIPYCDYVIGNEAEILSYGENHGIKSTDVQEIALALSSVEKVNKKRTRVVVITQGADATIVAKDGKVTTYKPNRVPSEEIVDTNGAGDAFAGGFIAALSQGQGIDYAVTLGHWLGQECIKVSGTTLPLPKKQFPLP</sequence>
<keyword id="KW-0067">ATP-binding</keyword>
<keyword id="KW-0418">Kinase</keyword>
<keyword id="KW-0460">Magnesium</keyword>
<keyword id="KW-0547">Nucleotide-binding</keyword>
<keyword id="KW-0660">Purine salvage</keyword>
<keyword id="KW-1185">Reference proteome</keyword>
<keyword id="KW-0808">Transferase</keyword>
<dbReference type="EC" id="2.7.1.20"/>
<dbReference type="EMBL" id="D89173">
    <property type="protein sequence ID" value="BAA13835.1"/>
    <property type="molecule type" value="mRNA"/>
</dbReference>
<dbReference type="EMBL" id="CU329672">
    <property type="protein sequence ID" value="CAA19345.2"/>
    <property type="molecule type" value="Genomic_DNA"/>
</dbReference>
<dbReference type="PIR" id="T41729">
    <property type="entry name" value="T41729"/>
</dbReference>
<dbReference type="PIR" id="T42538">
    <property type="entry name" value="T42538"/>
</dbReference>
<dbReference type="RefSeq" id="NP_588154.1">
    <property type="nucleotide sequence ID" value="NM_001023143.2"/>
</dbReference>
<dbReference type="SMR" id="P78825"/>
<dbReference type="BioGRID" id="275701">
    <property type="interactions" value="35"/>
</dbReference>
<dbReference type="FunCoup" id="P78825">
    <property type="interactions" value="544"/>
</dbReference>
<dbReference type="STRING" id="284812.P78825"/>
<dbReference type="iPTMnet" id="P78825"/>
<dbReference type="PaxDb" id="4896-SPCC338.14.1"/>
<dbReference type="EnsemblFungi" id="SPCC338.14.1">
    <property type="protein sequence ID" value="SPCC338.14.1:pep"/>
    <property type="gene ID" value="SPCC338.14"/>
</dbReference>
<dbReference type="GeneID" id="2539129"/>
<dbReference type="KEGG" id="spo:2539129"/>
<dbReference type="PomBase" id="SPCC338.14">
    <property type="gene designation" value="ado1"/>
</dbReference>
<dbReference type="VEuPathDB" id="FungiDB:SPCC338.14"/>
<dbReference type="eggNOG" id="KOG2854">
    <property type="taxonomic scope" value="Eukaryota"/>
</dbReference>
<dbReference type="HOGENOM" id="CLU_045832_0_0_1"/>
<dbReference type="InParanoid" id="P78825"/>
<dbReference type="OMA" id="RTMCTYL"/>
<dbReference type="PhylomeDB" id="P78825"/>
<dbReference type="Reactome" id="R-SPO-74217">
    <property type="pathway name" value="Purine salvage"/>
</dbReference>
<dbReference type="Reactome" id="R-SPO-9755088">
    <property type="pathway name" value="Ribavirin ADME"/>
</dbReference>
<dbReference type="UniPathway" id="UPA00588">
    <property type="reaction ID" value="UER00659"/>
</dbReference>
<dbReference type="PRO" id="PR:P78825"/>
<dbReference type="Proteomes" id="UP000002485">
    <property type="component" value="Chromosome III"/>
</dbReference>
<dbReference type="GO" id="GO:0005829">
    <property type="term" value="C:cytosol"/>
    <property type="evidence" value="ECO:0007005"/>
    <property type="project" value="PomBase"/>
</dbReference>
<dbReference type="GO" id="GO:0005634">
    <property type="term" value="C:nucleus"/>
    <property type="evidence" value="ECO:0007005"/>
    <property type="project" value="PomBase"/>
</dbReference>
<dbReference type="GO" id="GO:0004001">
    <property type="term" value="F:adenosine kinase activity"/>
    <property type="evidence" value="ECO:0000318"/>
    <property type="project" value="GO_Central"/>
</dbReference>
<dbReference type="GO" id="GO:0005524">
    <property type="term" value="F:ATP binding"/>
    <property type="evidence" value="ECO:0007669"/>
    <property type="project" value="UniProtKB-KW"/>
</dbReference>
<dbReference type="GO" id="GO:0006169">
    <property type="term" value="P:adenosine salvage"/>
    <property type="evidence" value="ECO:0000305"/>
    <property type="project" value="PomBase"/>
</dbReference>
<dbReference type="GO" id="GO:0044209">
    <property type="term" value="P:AMP salvage"/>
    <property type="evidence" value="ECO:0007669"/>
    <property type="project" value="UniProtKB-UniPathway"/>
</dbReference>
<dbReference type="GO" id="GO:0006144">
    <property type="term" value="P:purine nucleobase metabolic process"/>
    <property type="evidence" value="ECO:0000318"/>
    <property type="project" value="GO_Central"/>
</dbReference>
<dbReference type="CDD" id="cd01168">
    <property type="entry name" value="adenosine_kinase"/>
    <property type="match status" value="1"/>
</dbReference>
<dbReference type="FunFam" id="3.40.1190.20:FF:000076">
    <property type="entry name" value="Adenosine kinase"/>
    <property type="match status" value="1"/>
</dbReference>
<dbReference type="Gene3D" id="3.30.1110.10">
    <property type="match status" value="1"/>
</dbReference>
<dbReference type="Gene3D" id="3.40.1190.20">
    <property type="match status" value="1"/>
</dbReference>
<dbReference type="InterPro" id="IPR001805">
    <property type="entry name" value="Adenokinase"/>
</dbReference>
<dbReference type="InterPro" id="IPR002173">
    <property type="entry name" value="Carboh/pur_kinase_PfkB_CS"/>
</dbReference>
<dbReference type="InterPro" id="IPR011611">
    <property type="entry name" value="PfkB_dom"/>
</dbReference>
<dbReference type="InterPro" id="IPR029056">
    <property type="entry name" value="Ribokinase-like"/>
</dbReference>
<dbReference type="PANTHER" id="PTHR45769">
    <property type="entry name" value="ADENOSINE KINASE"/>
    <property type="match status" value="1"/>
</dbReference>
<dbReference type="PANTHER" id="PTHR45769:SF3">
    <property type="entry name" value="ADENOSINE KINASE"/>
    <property type="match status" value="1"/>
</dbReference>
<dbReference type="Pfam" id="PF00294">
    <property type="entry name" value="PfkB"/>
    <property type="match status" value="1"/>
</dbReference>
<dbReference type="PRINTS" id="PR00989">
    <property type="entry name" value="ADENOKINASE"/>
</dbReference>
<dbReference type="SUPFAM" id="SSF53613">
    <property type="entry name" value="Ribokinase-like"/>
    <property type="match status" value="1"/>
</dbReference>
<dbReference type="PROSITE" id="PS00584">
    <property type="entry name" value="PFKB_KINASES_2"/>
    <property type="match status" value="1"/>
</dbReference>
<proteinExistence type="evidence at transcript level"/>
<accession>P78825</accession>
<accession>Q76PD6</accession>
<name>ADK_SCHPO</name>
<gene>
    <name type="primary">ado1</name>
    <name type="ORF">SPCC338.14</name>
</gene>
<reference key="1">
    <citation type="journal article" date="1997" name="DNA Res.">
        <title>Identification of open reading frames in Schizosaccharomyces pombe cDNAs.</title>
        <authorList>
            <person name="Yoshioka S."/>
            <person name="Kato K."/>
            <person name="Nakai K."/>
            <person name="Okayama H."/>
            <person name="Nojima H."/>
        </authorList>
    </citation>
    <scope>NUCLEOTIDE SEQUENCE [LARGE SCALE MRNA]</scope>
    <source>
        <strain>PR745</strain>
    </source>
</reference>
<reference key="2">
    <citation type="journal article" date="2002" name="Nature">
        <title>The genome sequence of Schizosaccharomyces pombe.</title>
        <authorList>
            <person name="Wood V."/>
            <person name="Gwilliam R."/>
            <person name="Rajandream M.A."/>
            <person name="Lyne M.H."/>
            <person name="Lyne R."/>
            <person name="Stewart A."/>
            <person name="Sgouros J.G."/>
            <person name="Peat N."/>
            <person name="Hayles J."/>
            <person name="Baker S.G."/>
            <person name="Basham D."/>
            <person name="Bowman S."/>
            <person name="Brooks K."/>
            <person name="Brown D."/>
            <person name="Brown S."/>
            <person name="Chillingworth T."/>
            <person name="Churcher C.M."/>
            <person name="Collins M."/>
            <person name="Connor R."/>
            <person name="Cronin A."/>
            <person name="Davis P."/>
            <person name="Feltwell T."/>
            <person name="Fraser A."/>
            <person name="Gentles S."/>
            <person name="Goble A."/>
            <person name="Hamlin N."/>
            <person name="Harris D.E."/>
            <person name="Hidalgo J."/>
            <person name="Hodgson G."/>
            <person name="Holroyd S."/>
            <person name="Hornsby T."/>
            <person name="Howarth S."/>
            <person name="Huckle E.J."/>
            <person name="Hunt S."/>
            <person name="Jagels K."/>
            <person name="James K.D."/>
            <person name="Jones L."/>
            <person name="Jones M."/>
            <person name="Leather S."/>
            <person name="McDonald S."/>
            <person name="McLean J."/>
            <person name="Mooney P."/>
            <person name="Moule S."/>
            <person name="Mungall K.L."/>
            <person name="Murphy L.D."/>
            <person name="Niblett D."/>
            <person name="Odell C."/>
            <person name="Oliver K."/>
            <person name="O'Neil S."/>
            <person name="Pearson D."/>
            <person name="Quail M.A."/>
            <person name="Rabbinowitsch E."/>
            <person name="Rutherford K.M."/>
            <person name="Rutter S."/>
            <person name="Saunders D."/>
            <person name="Seeger K."/>
            <person name="Sharp S."/>
            <person name="Skelton J."/>
            <person name="Simmonds M.N."/>
            <person name="Squares R."/>
            <person name="Squares S."/>
            <person name="Stevens K."/>
            <person name="Taylor K."/>
            <person name="Taylor R.G."/>
            <person name="Tivey A."/>
            <person name="Walsh S.V."/>
            <person name="Warren T."/>
            <person name="Whitehead S."/>
            <person name="Woodward J.R."/>
            <person name="Volckaert G."/>
            <person name="Aert R."/>
            <person name="Robben J."/>
            <person name="Grymonprez B."/>
            <person name="Weltjens I."/>
            <person name="Vanstreels E."/>
            <person name="Rieger M."/>
            <person name="Schaefer M."/>
            <person name="Mueller-Auer S."/>
            <person name="Gabel C."/>
            <person name="Fuchs M."/>
            <person name="Duesterhoeft A."/>
            <person name="Fritzc C."/>
            <person name="Holzer E."/>
            <person name="Moestl D."/>
            <person name="Hilbert H."/>
            <person name="Borzym K."/>
            <person name="Langer I."/>
            <person name="Beck A."/>
            <person name="Lehrach H."/>
            <person name="Reinhardt R."/>
            <person name="Pohl T.M."/>
            <person name="Eger P."/>
            <person name="Zimmermann W."/>
            <person name="Wedler H."/>
            <person name="Wambutt R."/>
            <person name="Purnelle B."/>
            <person name="Goffeau A."/>
            <person name="Cadieu E."/>
            <person name="Dreano S."/>
            <person name="Gloux S."/>
            <person name="Lelaure V."/>
            <person name="Mottier S."/>
            <person name="Galibert F."/>
            <person name="Aves S.J."/>
            <person name="Xiang Z."/>
            <person name="Hunt C."/>
            <person name="Moore K."/>
            <person name="Hurst S.M."/>
            <person name="Lucas M."/>
            <person name="Rochet M."/>
            <person name="Gaillardin C."/>
            <person name="Tallada V.A."/>
            <person name="Garzon A."/>
            <person name="Thode G."/>
            <person name="Daga R.R."/>
            <person name="Cruzado L."/>
            <person name="Jimenez J."/>
            <person name="Sanchez M."/>
            <person name="del Rey F."/>
            <person name="Benito J."/>
            <person name="Dominguez A."/>
            <person name="Revuelta J.L."/>
            <person name="Moreno S."/>
            <person name="Armstrong J."/>
            <person name="Forsburg S.L."/>
            <person name="Cerutti L."/>
            <person name="Lowe T."/>
            <person name="McCombie W.R."/>
            <person name="Paulsen I."/>
            <person name="Potashkin J."/>
            <person name="Shpakovski G.V."/>
            <person name="Ussery D."/>
            <person name="Barrell B.G."/>
            <person name="Nurse P."/>
        </authorList>
    </citation>
    <scope>NUCLEOTIDE SEQUENCE [LARGE SCALE GENOMIC DNA]</scope>
    <source>
        <strain>972 / ATCC 24843</strain>
    </source>
</reference>
<organism>
    <name type="scientific">Schizosaccharomyces pombe (strain 972 / ATCC 24843)</name>
    <name type="common">Fission yeast</name>
    <dbReference type="NCBI Taxonomy" id="284812"/>
    <lineage>
        <taxon>Eukaryota</taxon>
        <taxon>Fungi</taxon>
        <taxon>Dikarya</taxon>
        <taxon>Ascomycota</taxon>
        <taxon>Taphrinomycotina</taxon>
        <taxon>Schizosaccharomycetes</taxon>
        <taxon>Schizosaccharomycetales</taxon>
        <taxon>Schizosaccharomycetaceae</taxon>
        <taxon>Schizosaccharomyces</taxon>
    </lineage>
</organism>
<protein>
    <recommendedName>
        <fullName>Adenosine kinase</fullName>
        <ecNumber>2.7.1.20</ecNumber>
    </recommendedName>
</protein>